<name>Y819_PASMU</name>
<organism>
    <name type="scientific">Pasteurella multocida (strain Pm70)</name>
    <dbReference type="NCBI Taxonomy" id="272843"/>
    <lineage>
        <taxon>Bacteria</taxon>
        <taxon>Pseudomonadati</taxon>
        <taxon>Pseudomonadota</taxon>
        <taxon>Gammaproteobacteria</taxon>
        <taxon>Pasteurellales</taxon>
        <taxon>Pasteurellaceae</taxon>
        <taxon>Pasteurella</taxon>
    </lineage>
</organism>
<gene>
    <name type="ordered locus">PM0819</name>
</gene>
<feature type="chain" id="PRO_0000216308" description="Uncharacterized protein PM0819">
    <location>
        <begin position="1"/>
        <end position="172"/>
    </location>
</feature>
<proteinExistence type="predicted"/>
<protein>
    <recommendedName>
        <fullName>Uncharacterized protein PM0819</fullName>
    </recommendedName>
</protein>
<sequence length="172" mass="20460">MCWRLLCVTEKTATILGSLRQFHLKIATDIVFDESQQNLICYDISNGMCACGIIQNTDHVEADQNLLAQTIKKWRRKGLSEPAIQRRLHDKEKQLAHKRSQQVEDYAGILDKWLKERTSPVYLLWYWQDKNQQSIRFTLPNRIIRETHQIPENTWVRYHVDEIKKNIVEENK</sequence>
<keyword id="KW-1185">Reference proteome</keyword>
<reference key="1">
    <citation type="journal article" date="2001" name="Proc. Natl. Acad. Sci. U.S.A.">
        <title>Complete genomic sequence of Pasteurella multocida Pm70.</title>
        <authorList>
            <person name="May B.J."/>
            <person name="Zhang Q."/>
            <person name="Li L.L."/>
            <person name="Paustian M.L."/>
            <person name="Whittam T.S."/>
            <person name="Kapur V."/>
        </authorList>
    </citation>
    <scope>NUCLEOTIDE SEQUENCE [LARGE SCALE GENOMIC DNA]</scope>
    <source>
        <strain>Pm70</strain>
    </source>
</reference>
<accession>Q9CMK4</accession>
<dbReference type="EMBL" id="AE004439">
    <property type="protein sequence ID" value="AAK02903.1"/>
    <property type="molecule type" value="Genomic_DNA"/>
</dbReference>
<dbReference type="RefSeq" id="WP_010906865.1">
    <property type="nucleotide sequence ID" value="NC_002663.1"/>
</dbReference>
<dbReference type="SMR" id="Q9CMK4"/>
<dbReference type="STRING" id="272843.PM0819"/>
<dbReference type="EnsemblBacteria" id="AAK02903">
    <property type="protein sequence ID" value="AAK02903"/>
    <property type="gene ID" value="PM0819"/>
</dbReference>
<dbReference type="KEGG" id="pmu:PM0819"/>
<dbReference type="PATRIC" id="fig|272843.6.peg.828"/>
<dbReference type="HOGENOM" id="CLU_1553808_0_0_6"/>
<dbReference type="Proteomes" id="UP000000809">
    <property type="component" value="Chromosome"/>
</dbReference>